<name>FBX15_MACFA</name>
<feature type="chain" id="PRO_0000119894" description="F-box only protein 15">
    <location>
        <begin position="1"/>
        <end position="434"/>
    </location>
</feature>
<feature type="domain" description="F-box" evidence="2">
    <location>
        <begin position="1"/>
        <end position="41"/>
    </location>
</feature>
<organism>
    <name type="scientific">Macaca fascicularis</name>
    <name type="common">Crab-eating macaque</name>
    <name type="synonym">Cynomolgus monkey</name>
    <dbReference type="NCBI Taxonomy" id="9541"/>
    <lineage>
        <taxon>Eukaryota</taxon>
        <taxon>Metazoa</taxon>
        <taxon>Chordata</taxon>
        <taxon>Craniata</taxon>
        <taxon>Vertebrata</taxon>
        <taxon>Euteleostomi</taxon>
        <taxon>Mammalia</taxon>
        <taxon>Eutheria</taxon>
        <taxon>Euarchontoglires</taxon>
        <taxon>Primates</taxon>
        <taxon>Haplorrhini</taxon>
        <taxon>Catarrhini</taxon>
        <taxon>Cercopithecidae</taxon>
        <taxon>Cercopithecinae</taxon>
        <taxon>Macaca</taxon>
    </lineage>
</organism>
<accession>Q9GKV7</accession>
<evidence type="ECO:0000250" key="1"/>
<evidence type="ECO:0000255" key="2">
    <source>
        <dbReference type="PROSITE-ProRule" id="PRU00080"/>
    </source>
</evidence>
<proteinExistence type="evidence at transcript level"/>
<keyword id="KW-1185">Reference proteome</keyword>
<keyword id="KW-0833">Ubl conjugation pathway</keyword>
<sequence length="434" mass="49353">MPSEILLKIFSYLDAVSLLCAGCVSRRFYHLANDNFIWIRIYSTAFSPTRSNWKVNSVEKIAVSVSFLSVQDKEAGYWKKEYITKQIASVKAALADILKPVNPYTGLPVKTKEALRMFGLGWAIILKEKSGKEYIMEHVDLSVNDTSVTVIWYGKNWPCLASLSTLDLCGVTPVFMDWYKTPTKHRLRWHSLIAKYNLSHLTVSTMIGCDRLIRIFCLHPGLLVGVWKKEEELAFVMANLHFHHLVERSTLGSATIPYELPPHSPFLDDSPEYGLHGYQLHVDLHSGGVFYLCGTFRNLFTKKGNIENGHVKLIVIHLKNNREHLPLIGKVGLSWKTDILDGCIKSCSMMDVTLLDEHGKPFWCFSSPVCMRSPATPADGPSFLGQTYSVDYVDAEGRVHVELVWIRETEEYLIVNLVLYLSIAKINRWFGTEY</sequence>
<dbReference type="EMBL" id="AB051122">
    <property type="protein sequence ID" value="BAB18148.1"/>
    <property type="molecule type" value="mRNA"/>
</dbReference>
<dbReference type="RefSeq" id="XP_005586512.1">
    <property type="nucleotide sequence ID" value="XM_005586455.2"/>
</dbReference>
<dbReference type="STRING" id="9541.ENSMFAP00000017358"/>
<dbReference type="GeneID" id="102135507"/>
<dbReference type="KEGG" id="mcf:102135507"/>
<dbReference type="CTD" id="201456"/>
<dbReference type="VEuPathDB" id="HostDB:ENSMFAG00000031818"/>
<dbReference type="eggNOG" id="ENOG502QPX2">
    <property type="taxonomic scope" value="Eukaryota"/>
</dbReference>
<dbReference type="OMA" id="YIMEHID"/>
<dbReference type="Proteomes" id="UP000233100">
    <property type="component" value="Chromosome 18"/>
</dbReference>
<dbReference type="GO" id="GO:0019005">
    <property type="term" value="C:SCF ubiquitin ligase complex"/>
    <property type="evidence" value="ECO:0007669"/>
    <property type="project" value="TreeGrafter"/>
</dbReference>
<dbReference type="CDD" id="cd22093">
    <property type="entry name" value="F-box_FBXO15"/>
    <property type="match status" value="1"/>
</dbReference>
<dbReference type="FunFam" id="1.20.1280.50:FF:000061">
    <property type="entry name" value="F-box only protein 15"/>
    <property type="match status" value="1"/>
</dbReference>
<dbReference type="Gene3D" id="1.20.1280.50">
    <property type="match status" value="1"/>
</dbReference>
<dbReference type="InterPro" id="IPR036047">
    <property type="entry name" value="F-box-like_dom_sf"/>
</dbReference>
<dbReference type="InterPro" id="IPR001810">
    <property type="entry name" value="F-box_dom"/>
</dbReference>
<dbReference type="PANTHER" id="PTHR46731">
    <property type="entry name" value="F-BOX ONLY PROTEIN 15"/>
    <property type="match status" value="1"/>
</dbReference>
<dbReference type="PANTHER" id="PTHR46731:SF1">
    <property type="entry name" value="F-BOX ONLY PROTEIN 15"/>
    <property type="match status" value="1"/>
</dbReference>
<dbReference type="Pfam" id="PF12937">
    <property type="entry name" value="F-box-like"/>
    <property type="match status" value="1"/>
</dbReference>
<dbReference type="SMART" id="SM00256">
    <property type="entry name" value="FBOX"/>
    <property type="match status" value="1"/>
</dbReference>
<dbReference type="SUPFAM" id="SSF81383">
    <property type="entry name" value="F-box domain"/>
    <property type="match status" value="1"/>
</dbReference>
<dbReference type="PROSITE" id="PS50181">
    <property type="entry name" value="FBOX"/>
    <property type="match status" value="1"/>
</dbReference>
<comment type="function">
    <text evidence="1">Substrate-recognition component of the SCF (SKP1-CUL1-F-box protein)-type E3 ubiquitin ligase complex.</text>
</comment>
<comment type="subunit">
    <text evidence="1">Directly interacts with SKP1 and CUL1.</text>
</comment>
<protein>
    <recommendedName>
        <fullName>F-box only protein 15</fullName>
    </recommendedName>
</protein>
<gene>
    <name type="primary">FBXO15</name>
    <name type="synonym">FBX15</name>
    <name type="ORF">QccE-19736</name>
</gene>
<reference key="1">
    <citation type="submission" date="2000-11" db="EMBL/GenBank/DDBJ databases">
        <title>Isolation of full-length cDNA clones from macaque brain cDNA libraries.</title>
        <authorList>
            <person name="Osada N."/>
            <person name="Hida M."/>
            <person name="Kusuda J."/>
            <person name="Tanuma R."/>
            <person name="Iseki K."/>
            <person name="Hirai M."/>
            <person name="Terao K."/>
            <person name="Suzuki Y."/>
            <person name="Sugano S."/>
            <person name="Hashimoto K."/>
        </authorList>
    </citation>
    <scope>NUCLEOTIDE SEQUENCE [LARGE SCALE MRNA]</scope>
    <source>
        <tissue>Brain cortex</tissue>
    </source>
</reference>